<evidence type="ECO:0000255" key="1">
    <source>
        <dbReference type="HAMAP-Rule" id="MF_00469"/>
    </source>
</evidence>
<evidence type="ECO:0000256" key="2">
    <source>
        <dbReference type="SAM" id="MobiDB-lite"/>
    </source>
</evidence>
<reference key="1">
    <citation type="journal article" date="2010" name="PLoS Genet.">
        <title>Genome sequence of the plant growth promoting endophytic bacterium Enterobacter sp. 638.</title>
        <authorList>
            <person name="Taghavi S."/>
            <person name="van der Lelie D."/>
            <person name="Hoffman A."/>
            <person name="Zhang Y.B."/>
            <person name="Walla M.D."/>
            <person name="Vangronsveld J."/>
            <person name="Newman L."/>
            <person name="Monchy S."/>
        </authorList>
    </citation>
    <scope>NUCLEOTIDE SEQUENCE [LARGE SCALE GENOMIC DNA]</scope>
    <source>
        <strain>638</strain>
    </source>
</reference>
<comment type="function">
    <text evidence="1">Catalyzes oxygen-dependent 5-hydroxyuridine (ho5U) modification at position 34 in tRNAs.</text>
</comment>
<comment type="catalytic activity">
    <reaction evidence="1">
        <text>uridine(34) in tRNA + AH2 + O2 = 5-hydroxyuridine(34) in tRNA + A + H2O</text>
        <dbReference type="Rhea" id="RHEA:64224"/>
        <dbReference type="Rhea" id="RHEA-COMP:11727"/>
        <dbReference type="Rhea" id="RHEA-COMP:13381"/>
        <dbReference type="ChEBI" id="CHEBI:13193"/>
        <dbReference type="ChEBI" id="CHEBI:15377"/>
        <dbReference type="ChEBI" id="CHEBI:15379"/>
        <dbReference type="ChEBI" id="CHEBI:17499"/>
        <dbReference type="ChEBI" id="CHEBI:65315"/>
        <dbReference type="ChEBI" id="CHEBI:136877"/>
    </reaction>
</comment>
<comment type="similarity">
    <text evidence="1">Belongs to the TrhO family.</text>
</comment>
<dbReference type="EC" id="1.14.-.-" evidence="1"/>
<dbReference type="EMBL" id="CP000653">
    <property type="protein sequence ID" value="ABP60248.1"/>
    <property type="molecule type" value="Genomic_DNA"/>
</dbReference>
<dbReference type="RefSeq" id="WP_012016965.1">
    <property type="nucleotide sequence ID" value="NC_009436.1"/>
</dbReference>
<dbReference type="SMR" id="A4W968"/>
<dbReference type="STRING" id="399742.Ent638_1569"/>
<dbReference type="KEGG" id="ent:Ent638_1569"/>
<dbReference type="eggNOG" id="COG1054">
    <property type="taxonomic scope" value="Bacteria"/>
</dbReference>
<dbReference type="HOGENOM" id="CLU_038878_1_1_6"/>
<dbReference type="OrthoDB" id="9778326at2"/>
<dbReference type="Proteomes" id="UP000000230">
    <property type="component" value="Chromosome"/>
</dbReference>
<dbReference type="GO" id="GO:0016705">
    <property type="term" value="F:oxidoreductase activity, acting on paired donors, with incorporation or reduction of molecular oxygen"/>
    <property type="evidence" value="ECO:0007669"/>
    <property type="project" value="UniProtKB-UniRule"/>
</dbReference>
<dbReference type="GO" id="GO:0006400">
    <property type="term" value="P:tRNA modification"/>
    <property type="evidence" value="ECO:0007669"/>
    <property type="project" value="UniProtKB-UniRule"/>
</dbReference>
<dbReference type="CDD" id="cd01518">
    <property type="entry name" value="RHOD_YceA"/>
    <property type="match status" value="1"/>
</dbReference>
<dbReference type="Gene3D" id="3.30.70.100">
    <property type="match status" value="1"/>
</dbReference>
<dbReference type="Gene3D" id="3.40.250.10">
    <property type="entry name" value="Rhodanese-like domain"/>
    <property type="match status" value="1"/>
</dbReference>
<dbReference type="HAMAP" id="MF_00469">
    <property type="entry name" value="TrhO"/>
    <property type="match status" value="1"/>
</dbReference>
<dbReference type="InterPro" id="IPR001763">
    <property type="entry name" value="Rhodanese-like_dom"/>
</dbReference>
<dbReference type="InterPro" id="IPR036873">
    <property type="entry name" value="Rhodanese-like_dom_sf"/>
</dbReference>
<dbReference type="InterPro" id="IPR022111">
    <property type="entry name" value="Rhodanese_C"/>
</dbReference>
<dbReference type="InterPro" id="IPR020936">
    <property type="entry name" value="TrhO"/>
</dbReference>
<dbReference type="InterPro" id="IPR040503">
    <property type="entry name" value="TRHO_N"/>
</dbReference>
<dbReference type="NCBIfam" id="NF001133">
    <property type="entry name" value="PRK00142.1-1"/>
    <property type="match status" value="1"/>
</dbReference>
<dbReference type="PANTHER" id="PTHR43846:SF1">
    <property type="entry name" value="TRNA URIDINE(34) HYDROXYLASE"/>
    <property type="match status" value="1"/>
</dbReference>
<dbReference type="PANTHER" id="PTHR43846">
    <property type="entry name" value="UPF0176 PROTEIN YCEA"/>
    <property type="match status" value="1"/>
</dbReference>
<dbReference type="Pfam" id="PF00581">
    <property type="entry name" value="Rhodanese"/>
    <property type="match status" value="1"/>
</dbReference>
<dbReference type="Pfam" id="PF12368">
    <property type="entry name" value="Rhodanese_C"/>
    <property type="match status" value="1"/>
</dbReference>
<dbReference type="Pfam" id="PF17773">
    <property type="entry name" value="UPF0176_N"/>
    <property type="match status" value="1"/>
</dbReference>
<dbReference type="SMART" id="SM00450">
    <property type="entry name" value="RHOD"/>
    <property type="match status" value="1"/>
</dbReference>
<dbReference type="SUPFAM" id="SSF52821">
    <property type="entry name" value="Rhodanese/Cell cycle control phosphatase"/>
    <property type="match status" value="1"/>
</dbReference>
<dbReference type="PROSITE" id="PS50206">
    <property type="entry name" value="RHODANESE_3"/>
    <property type="match status" value="1"/>
</dbReference>
<organism>
    <name type="scientific">Enterobacter sp. (strain 638)</name>
    <dbReference type="NCBI Taxonomy" id="399742"/>
    <lineage>
        <taxon>Bacteria</taxon>
        <taxon>Pseudomonadati</taxon>
        <taxon>Pseudomonadota</taxon>
        <taxon>Gammaproteobacteria</taxon>
        <taxon>Enterobacterales</taxon>
        <taxon>Enterobacteriaceae</taxon>
        <taxon>Enterobacter</taxon>
    </lineage>
</organism>
<keyword id="KW-0560">Oxidoreductase</keyword>
<keyword id="KW-0819">tRNA processing</keyword>
<feature type="chain" id="PRO_1000060367" description="tRNA uridine(34) hydroxylase">
    <location>
        <begin position="1"/>
        <end position="349"/>
    </location>
</feature>
<feature type="domain" description="Rhodanese" evidence="1">
    <location>
        <begin position="146"/>
        <end position="240"/>
    </location>
</feature>
<feature type="region of interest" description="Disordered" evidence="2">
    <location>
        <begin position="316"/>
        <end position="349"/>
    </location>
</feature>
<feature type="compositionally biased region" description="Basic and acidic residues" evidence="2">
    <location>
        <begin position="316"/>
        <end position="328"/>
    </location>
</feature>
<feature type="active site" description="Cysteine persulfide intermediate" evidence="1">
    <location>
        <position position="200"/>
    </location>
</feature>
<gene>
    <name evidence="1" type="primary">trhO</name>
    <name type="ordered locus">Ent638_1569</name>
</gene>
<name>TRHO_ENT38</name>
<protein>
    <recommendedName>
        <fullName evidence="1">tRNA uridine(34) hydroxylase</fullName>
        <ecNumber evidence="1">1.14.-.-</ecNumber>
    </recommendedName>
    <alternativeName>
        <fullName evidence="1">tRNA hydroxylation protein O</fullName>
    </alternativeName>
</protein>
<sequence>MPVLHNRISNETLKERMLAETEPRITISFYKYFSIAEPQETRDALYKAFESLNVFGRVYLAHEGINAQISVPESKVSAFRDFLYSFDPALNNVRLNIALDDDGKSFWVLRMKVRERIVADGIDDPTFNASDVGEYLKAAEVNAMLDDPDAVFIDMRNHYEYEVGHFENALEIPADTFREQLPKAVEMMQEHKDKKIIMYCTGGIRCEKASAWMKHSGFNKVWHIEGGIIEYARRAREQGLPVRFIGKNFVFDERMGERISEDIIAHCHQCGTPCDTHTNCKNDGCHLLFIQCPTCAEKFRGCCSELCSEESVLPEEEQRRRRAGRENGNKIFNKSRGRLNTKLGIPDPE</sequence>
<accession>A4W968</accession>
<proteinExistence type="inferred from homology"/>